<evidence type="ECO:0000255" key="1">
    <source>
        <dbReference type="HAMAP-Rule" id="MF_01334"/>
    </source>
</evidence>
<evidence type="ECO:0000305" key="2"/>
<keyword id="KW-0687">Ribonucleoprotein</keyword>
<keyword id="KW-0689">Ribosomal protein</keyword>
<keyword id="KW-0694">RNA-binding</keyword>
<keyword id="KW-0699">rRNA-binding</keyword>
<dbReference type="EMBL" id="CP000109">
    <property type="protein sequence ID" value="ABB40989.1"/>
    <property type="molecule type" value="Genomic_DNA"/>
</dbReference>
<dbReference type="SMR" id="Q31IN4"/>
<dbReference type="STRING" id="317025.Tcr_0393"/>
<dbReference type="KEGG" id="tcx:Tcr_0393"/>
<dbReference type="eggNOG" id="COG1825">
    <property type="taxonomic scope" value="Bacteria"/>
</dbReference>
<dbReference type="HOGENOM" id="CLU_075939_0_1_6"/>
<dbReference type="OrthoDB" id="9806411at2"/>
<dbReference type="GO" id="GO:0022625">
    <property type="term" value="C:cytosolic large ribosomal subunit"/>
    <property type="evidence" value="ECO:0007669"/>
    <property type="project" value="TreeGrafter"/>
</dbReference>
<dbReference type="GO" id="GO:0008097">
    <property type="term" value="F:5S rRNA binding"/>
    <property type="evidence" value="ECO:0007669"/>
    <property type="project" value="InterPro"/>
</dbReference>
<dbReference type="GO" id="GO:0003735">
    <property type="term" value="F:structural constituent of ribosome"/>
    <property type="evidence" value="ECO:0007669"/>
    <property type="project" value="InterPro"/>
</dbReference>
<dbReference type="GO" id="GO:0006412">
    <property type="term" value="P:translation"/>
    <property type="evidence" value="ECO:0007669"/>
    <property type="project" value="UniProtKB-UniRule"/>
</dbReference>
<dbReference type="CDD" id="cd00495">
    <property type="entry name" value="Ribosomal_L25_TL5_CTC"/>
    <property type="match status" value="1"/>
</dbReference>
<dbReference type="Gene3D" id="2.170.120.20">
    <property type="entry name" value="Ribosomal protein L25, beta domain"/>
    <property type="match status" value="1"/>
</dbReference>
<dbReference type="Gene3D" id="2.40.240.10">
    <property type="entry name" value="Ribosomal Protein L25, Chain P"/>
    <property type="match status" value="1"/>
</dbReference>
<dbReference type="HAMAP" id="MF_01334">
    <property type="entry name" value="Ribosomal_bL25_CTC"/>
    <property type="match status" value="1"/>
</dbReference>
<dbReference type="InterPro" id="IPR020056">
    <property type="entry name" value="Rbsml_bL25/Gln-tRNA_synth_N"/>
</dbReference>
<dbReference type="InterPro" id="IPR011035">
    <property type="entry name" value="Ribosomal_bL25/Gln-tRNA_synth"/>
</dbReference>
<dbReference type="InterPro" id="IPR020057">
    <property type="entry name" value="Ribosomal_bL25_b-dom"/>
</dbReference>
<dbReference type="InterPro" id="IPR037121">
    <property type="entry name" value="Ribosomal_bL25_C"/>
</dbReference>
<dbReference type="InterPro" id="IPR001021">
    <property type="entry name" value="Ribosomal_bL25_long"/>
</dbReference>
<dbReference type="InterPro" id="IPR029751">
    <property type="entry name" value="Ribosomal_L25_dom"/>
</dbReference>
<dbReference type="InterPro" id="IPR020930">
    <property type="entry name" value="Ribosomal_uL5_bac-type"/>
</dbReference>
<dbReference type="NCBIfam" id="TIGR00731">
    <property type="entry name" value="bL25_bact_ctc"/>
    <property type="match status" value="1"/>
</dbReference>
<dbReference type="NCBIfam" id="NF004130">
    <property type="entry name" value="PRK05618.1-5"/>
    <property type="match status" value="1"/>
</dbReference>
<dbReference type="NCBIfam" id="NF004612">
    <property type="entry name" value="PRK05943.1"/>
    <property type="match status" value="1"/>
</dbReference>
<dbReference type="PANTHER" id="PTHR33284">
    <property type="entry name" value="RIBOSOMAL PROTEIN L25/GLN-TRNA SYNTHETASE, ANTI-CODON-BINDING DOMAIN-CONTAINING PROTEIN"/>
    <property type="match status" value="1"/>
</dbReference>
<dbReference type="PANTHER" id="PTHR33284:SF1">
    <property type="entry name" value="RIBOSOMAL PROTEIN L25_GLN-TRNA SYNTHETASE, ANTI-CODON-BINDING DOMAIN-CONTAINING PROTEIN"/>
    <property type="match status" value="1"/>
</dbReference>
<dbReference type="Pfam" id="PF01386">
    <property type="entry name" value="Ribosomal_L25p"/>
    <property type="match status" value="1"/>
</dbReference>
<dbReference type="Pfam" id="PF14693">
    <property type="entry name" value="Ribosomal_TL5_C"/>
    <property type="match status" value="1"/>
</dbReference>
<dbReference type="SUPFAM" id="SSF50715">
    <property type="entry name" value="Ribosomal protein L25-like"/>
    <property type="match status" value="1"/>
</dbReference>
<protein>
    <recommendedName>
        <fullName evidence="1">Large ribosomal subunit protein bL25</fullName>
    </recommendedName>
    <alternativeName>
        <fullName evidence="2">50S ribosomal protein L25</fullName>
    </alternativeName>
    <alternativeName>
        <fullName evidence="1">General stress protein CTC</fullName>
    </alternativeName>
</protein>
<feature type="chain" id="PRO_0000244248" description="Large ribosomal subunit protein bL25">
    <location>
        <begin position="1"/>
        <end position="193"/>
    </location>
</feature>
<proteinExistence type="inferred from homology"/>
<name>RL25_HYDCU</name>
<gene>
    <name evidence="1" type="primary">rplY</name>
    <name evidence="1" type="synonym">ctc</name>
    <name type="ordered locus">Tcr_0393</name>
</gene>
<organism>
    <name type="scientific">Hydrogenovibrio crunogenus (strain DSM 25203 / XCL-2)</name>
    <name type="common">Thiomicrospira crunogena</name>
    <dbReference type="NCBI Taxonomy" id="317025"/>
    <lineage>
        <taxon>Bacteria</taxon>
        <taxon>Pseudomonadati</taxon>
        <taxon>Pseudomonadota</taxon>
        <taxon>Gammaproteobacteria</taxon>
        <taxon>Thiotrichales</taxon>
        <taxon>Piscirickettsiaceae</taxon>
        <taxon>Hydrogenovibrio</taxon>
    </lineage>
</organism>
<comment type="function">
    <text evidence="1">This is one of the proteins that binds to the 5S RNA in the ribosome where it forms part of the central protuberance.</text>
</comment>
<comment type="subunit">
    <text evidence="1">Part of the 50S ribosomal subunit; part of the 5S rRNA/L5/L18/L25 subcomplex. Contacts the 5S rRNA. Binds to the 5S rRNA independently of L5 and L18.</text>
</comment>
<comment type="similarity">
    <text evidence="1">Belongs to the bacterial ribosomal protein bL25 family. CTC subfamily.</text>
</comment>
<reference key="1">
    <citation type="journal article" date="2006" name="PLoS Biol.">
        <title>The genome of deep-sea vent chemolithoautotroph Thiomicrospira crunogena XCL-2.</title>
        <authorList>
            <person name="Scott K.M."/>
            <person name="Sievert S.M."/>
            <person name="Abril F.N."/>
            <person name="Ball L.A."/>
            <person name="Barrett C.J."/>
            <person name="Blake R.A."/>
            <person name="Boller A.J."/>
            <person name="Chain P.S.G."/>
            <person name="Clark J.A."/>
            <person name="Davis C.R."/>
            <person name="Detter C."/>
            <person name="Do K.F."/>
            <person name="Dobrinski K.P."/>
            <person name="Faza B.I."/>
            <person name="Fitzpatrick K.A."/>
            <person name="Freyermuth S.K."/>
            <person name="Harmer T.L."/>
            <person name="Hauser L.J."/>
            <person name="Huegler M."/>
            <person name="Kerfeld C.A."/>
            <person name="Klotz M.G."/>
            <person name="Kong W.W."/>
            <person name="Land M."/>
            <person name="Lapidus A."/>
            <person name="Larimer F.W."/>
            <person name="Longo D.L."/>
            <person name="Lucas S."/>
            <person name="Malfatti S.A."/>
            <person name="Massey S.E."/>
            <person name="Martin D.D."/>
            <person name="McCuddin Z."/>
            <person name="Meyer F."/>
            <person name="Moore J.L."/>
            <person name="Ocampo L.H. Jr."/>
            <person name="Paul J.H."/>
            <person name="Paulsen I.T."/>
            <person name="Reep D.K."/>
            <person name="Ren Q."/>
            <person name="Ross R.L."/>
            <person name="Sato P.Y."/>
            <person name="Thomas P."/>
            <person name="Tinkham L.E."/>
            <person name="Zeruth G.T."/>
        </authorList>
    </citation>
    <scope>NUCLEOTIDE SEQUENCE [LARGE SCALE GENOMIC DNA]</scope>
    <source>
        <strain>DSM 25203 / XCL-2</strain>
    </source>
</reference>
<accession>Q31IN4</accession>
<sequence>MSQVWTAELRTEEGKGASRRLRHAGKVPAIIYGGDVDAKSIALKSNQIERALKLDVDLYNSVLTLEGAGDAENCIIKDLQRHPATGFITHIDFQRASDKAMVTKRVPLKFKGKESSPGVKMGGLMSFMQTTVEVSCLAKDLPTAIDVDVSELEAGTNLRLSQLTLPKGVKLTALTHGNTDYDQAVVGISKVKR</sequence>